<organism>
    <name type="scientific">Neisseria meningitidis serogroup A / serotype 4A (strain DSM 15465 / Z2491)</name>
    <dbReference type="NCBI Taxonomy" id="122587"/>
    <lineage>
        <taxon>Bacteria</taxon>
        <taxon>Pseudomonadati</taxon>
        <taxon>Pseudomonadota</taxon>
        <taxon>Betaproteobacteria</taxon>
        <taxon>Neisseriales</taxon>
        <taxon>Neisseriaceae</taxon>
        <taxon>Neisseria</taxon>
    </lineage>
</organism>
<evidence type="ECO:0000250" key="1"/>
<evidence type="ECO:0000255" key="2">
    <source>
        <dbReference type="PROSITE-ProRule" id="PRU00660"/>
    </source>
</evidence>
<evidence type="ECO:0000305" key="3"/>
<gene>
    <name type="primary">folA</name>
    <name type="ordered locus">NMA2179</name>
</gene>
<protein>
    <recommendedName>
        <fullName>Dihydrofolate reductase</fullName>
        <ecNumber>1.5.1.3</ecNumber>
    </recommendedName>
</protein>
<dbReference type="EC" id="1.5.1.3"/>
<dbReference type="EMBL" id="AL157959">
    <property type="protein sequence ID" value="CAM09274.1"/>
    <property type="molecule type" value="Genomic_DNA"/>
</dbReference>
<dbReference type="PIR" id="H81790">
    <property type="entry name" value="H81790"/>
</dbReference>
<dbReference type="RefSeq" id="WP_002216373.1">
    <property type="nucleotide sequence ID" value="NC_003116.1"/>
</dbReference>
<dbReference type="SMR" id="Q9JSQ9"/>
<dbReference type="EnsemblBacteria" id="CAM09274">
    <property type="protein sequence ID" value="CAM09274"/>
    <property type="gene ID" value="NMA2179"/>
</dbReference>
<dbReference type="KEGG" id="nma:NMA2179"/>
<dbReference type="HOGENOM" id="CLU_043966_5_1_4"/>
<dbReference type="UniPathway" id="UPA00077">
    <property type="reaction ID" value="UER00158"/>
</dbReference>
<dbReference type="Proteomes" id="UP000000626">
    <property type="component" value="Chromosome"/>
</dbReference>
<dbReference type="GO" id="GO:0005829">
    <property type="term" value="C:cytosol"/>
    <property type="evidence" value="ECO:0007669"/>
    <property type="project" value="TreeGrafter"/>
</dbReference>
<dbReference type="GO" id="GO:0004146">
    <property type="term" value="F:dihydrofolate reductase activity"/>
    <property type="evidence" value="ECO:0007669"/>
    <property type="project" value="UniProtKB-EC"/>
</dbReference>
<dbReference type="GO" id="GO:0050661">
    <property type="term" value="F:NADP binding"/>
    <property type="evidence" value="ECO:0007669"/>
    <property type="project" value="InterPro"/>
</dbReference>
<dbReference type="GO" id="GO:0046452">
    <property type="term" value="P:dihydrofolate metabolic process"/>
    <property type="evidence" value="ECO:0007669"/>
    <property type="project" value="TreeGrafter"/>
</dbReference>
<dbReference type="GO" id="GO:0046655">
    <property type="term" value="P:folic acid metabolic process"/>
    <property type="evidence" value="ECO:0007669"/>
    <property type="project" value="TreeGrafter"/>
</dbReference>
<dbReference type="GO" id="GO:0006730">
    <property type="term" value="P:one-carbon metabolic process"/>
    <property type="evidence" value="ECO:0007669"/>
    <property type="project" value="UniProtKB-KW"/>
</dbReference>
<dbReference type="GO" id="GO:0046654">
    <property type="term" value="P:tetrahydrofolate biosynthetic process"/>
    <property type="evidence" value="ECO:0007669"/>
    <property type="project" value="UniProtKB-UniPathway"/>
</dbReference>
<dbReference type="CDD" id="cd00209">
    <property type="entry name" value="DHFR"/>
    <property type="match status" value="1"/>
</dbReference>
<dbReference type="FunFam" id="3.40.430.10:FF:000001">
    <property type="entry name" value="Dihydrofolate reductase"/>
    <property type="match status" value="1"/>
</dbReference>
<dbReference type="Gene3D" id="3.40.430.10">
    <property type="entry name" value="Dihydrofolate Reductase, subunit A"/>
    <property type="match status" value="1"/>
</dbReference>
<dbReference type="InterPro" id="IPR012259">
    <property type="entry name" value="DHFR"/>
</dbReference>
<dbReference type="InterPro" id="IPR024072">
    <property type="entry name" value="DHFR-like_dom_sf"/>
</dbReference>
<dbReference type="InterPro" id="IPR017925">
    <property type="entry name" value="DHFR_CS"/>
</dbReference>
<dbReference type="InterPro" id="IPR001796">
    <property type="entry name" value="DHFR_dom"/>
</dbReference>
<dbReference type="PANTHER" id="PTHR48069">
    <property type="entry name" value="DIHYDROFOLATE REDUCTASE"/>
    <property type="match status" value="1"/>
</dbReference>
<dbReference type="PANTHER" id="PTHR48069:SF3">
    <property type="entry name" value="DIHYDROFOLATE REDUCTASE"/>
    <property type="match status" value="1"/>
</dbReference>
<dbReference type="Pfam" id="PF00186">
    <property type="entry name" value="DHFR_1"/>
    <property type="match status" value="1"/>
</dbReference>
<dbReference type="PIRSF" id="PIRSF000194">
    <property type="entry name" value="DHFR"/>
    <property type="match status" value="1"/>
</dbReference>
<dbReference type="PRINTS" id="PR00070">
    <property type="entry name" value="DHFR"/>
</dbReference>
<dbReference type="SUPFAM" id="SSF53597">
    <property type="entry name" value="Dihydrofolate reductase-like"/>
    <property type="match status" value="1"/>
</dbReference>
<dbReference type="PROSITE" id="PS00075">
    <property type="entry name" value="DHFR_1"/>
    <property type="match status" value="1"/>
</dbReference>
<dbReference type="PROSITE" id="PS51330">
    <property type="entry name" value="DHFR_2"/>
    <property type="match status" value="1"/>
</dbReference>
<comment type="function">
    <text evidence="1">Key enzyme in folate metabolism. Catalyzes an essential reaction for de novo glycine and purine synthesis, and for DNA precursor synthesis (By similarity).</text>
</comment>
<comment type="catalytic activity">
    <reaction evidence="2">
        <text>(6S)-5,6,7,8-tetrahydrofolate + NADP(+) = 7,8-dihydrofolate + NADPH + H(+)</text>
        <dbReference type="Rhea" id="RHEA:15009"/>
        <dbReference type="ChEBI" id="CHEBI:15378"/>
        <dbReference type="ChEBI" id="CHEBI:57451"/>
        <dbReference type="ChEBI" id="CHEBI:57453"/>
        <dbReference type="ChEBI" id="CHEBI:57783"/>
        <dbReference type="ChEBI" id="CHEBI:58349"/>
        <dbReference type="EC" id="1.5.1.3"/>
    </reaction>
</comment>
<comment type="pathway">
    <text>Cofactor biosynthesis; tetrahydrofolate biosynthesis; 5,6,7,8-tetrahydrofolate from 7,8-dihydrofolate: step 1/1.</text>
</comment>
<comment type="similarity">
    <text evidence="3">Belongs to the dihydrofolate reductase family.</text>
</comment>
<accession>Q9JSQ9</accession>
<accession>A1IU05</accession>
<feature type="chain" id="PRO_0000186402" description="Dihydrofolate reductase">
    <location>
        <begin position="1"/>
        <end position="162"/>
    </location>
</feature>
<feature type="domain" description="DHFR" evidence="2">
    <location>
        <begin position="3"/>
        <end position="161"/>
    </location>
</feature>
<feature type="binding site" evidence="1">
    <location>
        <begin position="7"/>
        <end position="9"/>
    </location>
    <ligand>
        <name>substrate</name>
    </ligand>
</feature>
<feature type="binding site" evidence="1">
    <location>
        <begin position="8"/>
        <end position="9"/>
    </location>
    <ligand>
        <name>NADP(+)</name>
        <dbReference type="ChEBI" id="CHEBI:58349"/>
    </ligand>
</feature>
<feature type="binding site" evidence="1">
    <location>
        <begin position="16"/>
        <end position="21"/>
    </location>
    <ligand>
        <name>NADP(+)</name>
        <dbReference type="ChEBI" id="CHEBI:58349"/>
    </ligand>
</feature>
<feature type="binding site" evidence="1">
    <location>
        <position position="29"/>
    </location>
    <ligand>
        <name>substrate</name>
    </ligand>
</feature>
<feature type="binding site" evidence="1">
    <location>
        <begin position="45"/>
        <end position="48"/>
    </location>
    <ligand>
        <name>NADP(+)</name>
        <dbReference type="ChEBI" id="CHEBI:58349"/>
    </ligand>
</feature>
<feature type="binding site" evidence="1">
    <location>
        <position position="60"/>
    </location>
    <ligand>
        <name>substrate</name>
    </ligand>
</feature>
<feature type="binding site" evidence="1">
    <location>
        <begin position="65"/>
        <end position="68"/>
    </location>
    <ligand>
        <name>NADP(+)</name>
        <dbReference type="ChEBI" id="CHEBI:58349"/>
    </ligand>
</feature>
<feature type="binding site" evidence="1">
    <location>
        <begin position="98"/>
        <end position="103"/>
    </location>
    <ligand>
        <name>NADP(+)</name>
        <dbReference type="ChEBI" id="CHEBI:58349"/>
    </ligand>
</feature>
<feature type="binding site" evidence="1">
    <location>
        <position position="117"/>
    </location>
    <ligand>
        <name>substrate</name>
    </ligand>
</feature>
<name>DYR_NEIMA</name>
<proteinExistence type="inferred from homology"/>
<reference key="1">
    <citation type="journal article" date="2000" name="Nature">
        <title>Complete DNA sequence of a serogroup A strain of Neisseria meningitidis Z2491.</title>
        <authorList>
            <person name="Parkhill J."/>
            <person name="Achtman M."/>
            <person name="James K.D."/>
            <person name="Bentley S.D."/>
            <person name="Churcher C.M."/>
            <person name="Klee S.R."/>
            <person name="Morelli G."/>
            <person name="Basham D."/>
            <person name="Brown D."/>
            <person name="Chillingworth T."/>
            <person name="Davies R.M."/>
            <person name="Davis P."/>
            <person name="Devlin K."/>
            <person name="Feltwell T."/>
            <person name="Hamlin N."/>
            <person name="Holroyd S."/>
            <person name="Jagels K."/>
            <person name="Leather S."/>
            <person name="Moule S."/>
            <person name="Mungall K.L."/>
            <person name="Quail M.A."/>
            <person name="Rajandream M.A."/>
            <person name="Rutherford K.M."/>
            <person name="Simmonds M."/>
            <person name="Skelton J."/>
            <person name="Whitehead S."/>
            <person name="Spratt B.G."/>
            <person name="Barrell B.G."/>
        </authorList>
    </citation>
    <scope>NUCLEOTIDE SEQUENCE [LARGE SCALE GENOMIC DNA]</scope>
    <source>
        <strain>DSM 15465 / Z2491</strain>
    </source>
</reference>
<sequence length="162" mass="17682">MLKITLIAACAENLCIGAGNAMPWHIPEDFAFFKAYTLGKPVIMGRKTWESLPVKPLPGRRNIVISRQADYCAAGAETAASLEAALALCAGAEEAVIMGGAQIYGQAMPLATDLRITEVDLSVEGDAFFPAIDRTHWKEAERTERRVSSKGTSYAFVHYLRY</sequence>
<keyword id="KW-0521">NADP</keyword>
<keyword id="KW-0554">One-carbon metabolism</keyword>
<keyword id="KW-0560">Oxidoreductase</keyword>